<comment type="catalytic activity">
    <reaction evidence="1">
        <text>D-altronate + NAD(+) = keto-D-tagaturonate + NADH + H(+)</text>
        <dbReference type="Rhea" id="RHEA:17813"/>
        <dbReference type="ChEBI" id="CHEBI:15378"/>
        <dbReference type="ChEBI" id="CHEBI:17360"/>
        <dbReference type="ChEBI" id="CHEBI:17886"/>
        <dbReference type="ChEBI" id="CHEBI:57540"/>
        <dbReference type="ChEBI" id="CHEBI:57945"/>
        <dbReference type="EC" id="1.1.1.58"/>
    </reaction>
</comment>
<comment type="pathway">
    <text evidence="1">Carbohydrate metabolism; pentose and glucuronate interconversion.</text>
</comment>
<comment type="similarity">
    <text evidence="1">Belongs to the mannitol dehydrogenase family. UxaB subfamily.</text>
</comment>
<feature type="chain" id="PRO_1000131508" description="Altronate oxidoreductase">
    <location>
        <begin position="1"/>
        <end position="483"/>
    </location>
</feature>
<feature type="binding site" evidence="1">
    <location>
        <begin position="18"/>
        <end position="29"/>
    </location>
    <ligand>
        <name>NAD(+)</name>
        <dbReference type="ChEBI" id="CHEBI:57540"/>
    </ligand>
</feature>
<name>UXAB_ECO7I</name>
<reference key="1">
    <citation type="journal article" date="2009" name="PLoS Genet.">
        <title>Organised genome dynamics in the Escherichia coli species results in highly diverse adaptive paths.</title>
        <authorList>
            <person name="Touchon M."/>
            <person name="Hoede C."/>
            <person name="Tenaillon O."/>
            <person name="Barbe V."/>
            <person name="Baeriswyl S."/>
            <person name="Bidet P."/>
            <person name="Bingen E."/>
            <person name="Bonacorsi S."/>
            <person name="Bouchier C."/>
            <person name="Bouvet O."/>
            <person name="Calteau A."/>
            <person name="Chiapello H."/>
            <person name="Clermont O."/>
            <person name="Cruveiller S."/>
            <person name="Danchin A."/>
            <person name="Diard M."/>
            <person name="Dossat C."/>
            <person name="Karoui M.E."/>
            <person name="Frapy E."/>
            <person name="Garry L."/>
            <person name="Ghigo J.M."/>
            <person name="Gilles A.M."/>
            <person name="Johnson J."/>
            <person name="Le Bouguenec C."/>
            <person name="Lescat M."/>
            <person name="Mangenot S."/>
            <person name="Martinez-Jehanne V."/>
            <person name="Matic I."/>
            <person name="Nassif X."/>
            <person name="Oztas S."/>
            <person name="Petit M.A."/>
            <person name="Pichon C."/>
            <person name="Rouy Z."/>
            <person name="Ruf C.S."/>
            <person name="Schneider D."/>
            <person name="Tourret J."/>
            <person name="Vacherie B."/>
            <person name="Vallenet D."/>
            <person name="Medigue C."/>
            <person name="Rocha E.P.C."/>
            <person name="Denamur E."/>
        </authorList>
    </citation>
    <scope>NUCLEOTIDE SEQUENCE [LARGE SCALE GENOMIC DNA]</scope>
    <source>
        <strain>IAI39 / ExPEC</strain>
    </source>
</reference>
<accession>B7NIJ4</accession>
<gene>
    <name evidence="1" type="primary">uxaB</name>
    <name type="ordered locus">ECIAI39_1785</name>
</gene>
<proteinExistence type="inferred from homology"/>
<protein>
    <recommendedName>
        <fullName evidence="1">Altronate oxidoreductase</fullName>
        <ecNumber evidence="1">1.1.1.58</ecNumber>
    </recommendedName>
    <alternativeName>
        <fullName evidence="1">Tagaturonate dehydrogenase</fullName>
    </alternativeName>
    <alternativeName>
        <fullName evidence="1">Tagaturonate reductase</fullName>
    </alternativeName>
</protein>
<evidence type="ECO:0000255" key="1">
    <source>
        <dbReference type="HAMAP-Rule" id="MF_00670"/>
    </source>
</evidence>
<sequence>MKTLNRRDFPGAQYPERIIQFGEGNFLRAFVDWQIDLLNEHTDLNSGVVVVRPIETSFPPSLSTQDGLYTTIIRGLNEKGEAVSDARLIRSVNREISVYSEYDEFLKLAHNPEMRFVFSNTTEAGISYHAGDKFDDAPAVSYPAKLTRLLFERFSHFNGAQDKGWIIIPCELIDYNGDALRELVLRYAQEWALPEAFIQWLDQANSFCSTLVDRIVTGYPRDEVAKLEEELGYHDGFLDTAEHFYLFVIQGPKSLATELRLDKYPLNVLIVDDIKPYKERKVAILNGAHTALVPVAFQAGLDTVGEAMNDAEICAFVEKAIYEEIIPVLDLPRDELESFASAVTGRFRNPYIKHQLLSIALNGMTKFRTRILPQLLAGQKSNGTLPARLTFALAALIAFYRGERNGETYPVQDDAHWLERYQQLWSQHRNRVIGTQELVAIVLAEKDHWEQDLTQVPGLVEQVANDLDAILEKGMREAVRPLC</sequence>
<organism>
    <name type="scientific">Escherichia coli O7:K1 (strain IAI39 / ExPEC)</name>
    <dbReference type="NCBI Taxonomy" id="585057"/>
    <lineage>
        <taxon>Bacteria</taxon>
        <taxon>Pseudomonadati</taxon>
        <taxon>Pseudomonadota</taxon>
        <taxon>Gammaproteobacteria</taxon>
        <taxon>Enterobacterales</taxon>
        <taxon>Enterobacteriaceae</taxon>
        <taxon>Escherichia</taxon>
    </lineage>
</organism>
<dbReference type="EC" id="1.1.1.58" evidence="1"/>
<dbReference type="EMBL" id="CU928164">
    <property type="protein sequence ID" value="CAR17916.1"/>
    <property type="molecule type" value="Genomic_DNA"/>
</dbReference>
<dbReference type="RefSeq" id="WP_000854646.1">
    <property type="nucleotide sequence ID" value="NC_011750.1"/>
</dbReference>
<dbReference type="RefSeq" id="YP_002407771.1">
    <property type="nucleotide sequence ID" value="NC_011750.1"/>
</dbReference>
<dbReference type="SMR" id="B7NIJ4"/>
<dbReference type="STRING" id="585057.ECIAI39_1785"/>
<dbReference type="KEGG" id="ect:ECIAI39_1785"/>
<dbReference type="PATRIC" id="fig|585057.6.peg.1858"/>
<dbReference type="HOGENOM" id="CLU_027324_1_0_6"/>
<dbReference type="UniPathway" id="UPA00246"/>
<dbReference type="Proteomes" id="UP000000749">
    <property type="component" value="Chromosome"/>
</dbReference>
<dbReference type="GO" id="GO:0005829">
    <property type="term" value="C:cytosol"/>
    <property type="evidence" value="ECO:0007669"/>
    <property type="project" value="TreeGrafter"/>
</dbReference>
<dbReference type="GO" id="GO:0008926">
    <property type="term" value="F:mannitol-1-phosphate 5-dehydrogenase activity"/>
    <property type="evidence" value="ECO:0007669"/>
    <property type="project" value="TreeGrafter"/>
</dbReference>
<dbReference type="GO" id="GO:0009026">
    <property type="term" value="F:tagaturonate reductase activity"/>
    <property type="evidence" value="ECO:0007669"/>
    <property type="project" value="UniProtKB-UniRule"/>
</dbReference>
<dbReference type="GO" id="GO:0019698">
    <property type="term" value="P:D-galacturonate catabolic process"/>
    <property type="evidence" value="ECO:0007669"/>
    <property type="project" value="TreeGrafter"/>
</dbReference>
<dbReference type="GO" id="GO:0019592">
    <property type="term" value="P:mannitol catabolic process"/>
    <property type="evidence" value="ECO:0007669"/>
    <property type="project" value="TreeGrafter"/>
</dbReference>
<dbReference type="FunFam" id="1.10.1040.10:FF:000018">
    <property type="entry name" value="Altronate oxidoreductase"/>
    <property type="match status" value="1"/>
</dbReference>
<dbReference type="FunFam" id="3.40.50.720:FF:000153">
    <property type="entry name" value="Altronate oxidoreductase"/>
    <property type="match status" value="1"/>
</dbReference>
<dbReference type="Gene3D" id="1.10.1040.10">
    <property type="entry name" value="N-(1-d-carboxylethyl)-l-norvaline Dehydrogenase, domain 2"/>
    <property type="match status" value="1"/>
</dbReference>
<dbReference type="Gene3D" id="3.40.50.720">
    <property type="entry name" value="NAD(P)-binding Rossmann-like Domain"/>
    <property type="match status" value="1"/>
</dbReference>
<dbReference type="HAMAP" id="MF_00670">
    <property type="entry name" value="Altron_oxidoreduct"/>
    <property type="match status" value="1"/>
</dbReference>
<dbReference type="InterPro" id="IPR008927">
    <property type="entry name" value="6-PGluconate_DH-like_C_sf"/>
</dbReference>
<dbReference type="InterPro" id="IPR013328">
    <property type="entry name" value="6PGD_dom2"/>
</dbReference>
<dbReference type="InterPro" id="IPR023668">
    <property type="entry name" value="Altronate_OxRdtase"/>
</dbReference>
<dbReference type="InterPro" id="IPR013118">
    <property type="entry name" value="Mannitol_DH_C"/>
</dbReference>
<dbReference type="InterPro" id="IPR013131">
    <property type="entry name" value="Mannitol_DH_N"/>
</dbReference>
<dbReference type="InterPro" id="IPR036291">
    <property type="entry name" value="NAD(P)-bd_dom_sf"/>
</dbReference>
<dbReference type="NCBIfam" id="NF002969">
    <property type="entry name" value="PRK03643.1"/>
    <property type="match status" value="1"/>
</dbReference>
<dbReference type="PANTHER" id="PTHR30524:SF0">
    <property type="entry name" value="ALTRONATE OXIDOREDUCTASE-RELATED"/>
    <property type="match status" value="1"/>
</dbReference>
<dbReference type="PANTHER" id="PTHR30524">
    <property type="entry name" value="MANNITOL-1-PHOSPHATE 5-DEHYDROGENASE"/>
    <property type="match status" value="1"/>
</dbReference>
<dbReference type="Pfam" id="PF01232">
    <property type="entry name" value="Mannitol_dh"/>
    <property type="match status" value="1"/>
</dbReference>
<dbReference type="Pfam" id="PF08125">
    <property type="entry name" value="Mannitol_dh_C"/>
    <property type="match status" value="1"/>
</dbReference>
<dbReference type="SUPFAM" id="SSF48179">
    <property type="entry name" value="6-phosphogluconate dehydrogenase C-terminal domain-like"/>
    <property type="match status" value="1"/>
</dbReference>
<dbReference type="SUPFAM" id="SSF51735">
    <property type="entry name" value="NAD(P)-binding Rossmann-fold domains"/>
    <property type="match status" value="1"/>
</dbReference>
<keyword id="KW-0520">NAD</keyword>
<keyword id="KW-0560">Oxidoreductase</keyword>